<keyword id="KW-1003">Cell membrane</keyword>
<keyword id="KW-1015">Disulfide bond</keyword>
<keyword id="KW-0297">G-protein coupled receptor</keyword>
<keyword id="KW-0325">Glycoprotein</keyword>
<keyword id="KW-0472">Membrane</keyword>
<keyword id="KW-0597">Phosphoprotein</keyword>
<keyword id="KW-0675">Receptor</keyword>
<keyword id="KW-1185">Reference proteome</keyword>
<keyword id="KW-0807">Transducer</keyword>
<keyword id="KW-0812">Transmembrane</keyword>
<keyword id="KW-1133">Transmembrane helix</keyword>
<proteinExistence type="evidence at transcript level"/>
<accession>P30935</accession>
<accession>Q0VB04</accession>
<accession>Q3UVV5</accession>
<gene>
    <name type="primary">Sstr3</name>
    <name type="synonym">Smstr3</name>
</gene>
<name>SSR3_MOUSE</name>
<protein>
    <recommendedName>
        <fullName>Somatostatin receptor type 3</fullName>
        <shortName>SS-3-R</shortName>
        <shortName>SS3-R</shortName>
        <shortName>SS3R</shortName>
    </recommendedName>
    <alternativeName>
        <fullName>SSR-28</fullName>
    </alternativeName>
</protein>
<evidence type="ECO:0000250" key="1"/>
<evidence type="ECO:0000250" key="2">
    <source>
        <dbReference type="UniProtKB" id="P30936"/>
    </source>
</evidence>
<evidence type="ECO:0000255" key="3"/>
<evidence type="ECO:0000255" key="4">
    <source>
        <dbReference type="PROSITE-ProRule" id="PRU00521"/>
    </source>
</evidence>
<evidence type="ECO:0000256" key="5">
    <source>
        <dbReference type="SAM" id="MobiDB-lite"/>
    </source>
</evidence>
<evidence type="ECO:0000269" key="6">
    <source>
    </source>
</evidence>
<evidence type="ECO:0000305" key="7"/>
<dbReference type="EMBL" id="M91000">
    <property type="protein sequence ID" value="AAA40144.1"/>
    <property type="molecule type" value="Genomic_DNA"/>
</dbReference>
<dbReference type="EMBL" id="AK136904">
    <property type="protein sequence ID" value="BAE23164.1"/>
    <property type="molecule type" value="mRNA"/>
</dbReference>
<dbReference type="EMBL" id="AL590144">
    <property type="status" value="NOT_ANNOTATED_CDS"/>
    <property type="molecule type" value="Genomic_DNA"/>
</dbReference>
<dbReference type="EMBL" id="BC120843">
    <property type="protein sequence ID" value="AAI20844.1"/>
    <property type="molecule type" value="mRNA"/>
</dbReference>
<dbReference type="EMBL" id="BC137670">
    <property type="protein sequence ID" value="AAI37671.1"/>
    <property type="molecule type" value="mRNA"/>
</dbReference>
<dbReference type="CCDS" id="CCDS27617.1"/>
<dbReference type="PIR" id="A44021">
    <property type="entry name" value="A44021"/>
</dbReference>
<dbReference type="RefSeq" id="NP_001343890.1">
    <property type="nucleotide sequence ID" value="NM_001356961.1"/>
</dbReference>
<dbReference type="RefSeq" id="NP_001398697.1">
    <property type="nucleotide sequence ID" value="NM_001411768.1"/>
</dbReference>
<dbReference type="RefSeq" id="NP_033244.2">
    <property type="nucleotide sequence ID" value="NM_009218.3"/>
</dbReference>
<dbReference type="RefSeq" id="XP_006520732.1">
    <property type="nucleotide sequence ID" value="XM_006520669.3"/>
</dbReference>
<dbReference type="RefSeq" id="XP_006520733.1">
    <property type="nucleotide sequence ID" value="XM_006520670.3"/>
</dbReference>
<dbReference type="RefSeq" id="XP_011243833.1">
    <property type="nucleotide sequence ID" value="XM_011245531.2"/>
</dbReference>
<dbReference type="SMR" id="P30935"/>
<dbReference type="BioGRID" id="203355">
    <property type="interactions" value="388"/>
</dbReference>
<dbReference type="CORUM" id="P30935"/>
<dbReference type="FunCoup" id="P30935">
    <property type="interactions" value="590"/>
</dbReference>
<dbReference type="IntAct" id="P30935">
    <property type="interactions" value="9"/>
</dbReference>
<dbReference type="STRING" id="10090.ENSMUSP00000058040"/>
<dbReference type="BindingDB" id="P30935"/>
<dbReference type="ChEMBL" id="CHEMBL2238"/>
<dbReference type="DrugCentral" id="P30935"/>
<dbReference type="GuidetoPHARMACOLOGY" id="357"/>
<dbReference type="GlyCosmos" id="P30935">
    <property type="glycosylation" value="2 sites, No reported glycans"/>
</dbReference>
<dbReference type="GlyGen" id="P30935">
    <property type="glycosylation" value="2 sites"/>
</dbReference>
<dbReference type="iPTMnet" id="P30935"/>
<dbReference type="PhosphoSitePlus" id="P30935"/>
<dbReference type="PaxDb" id="10090-ENSMUSP00000058040"/>
<dbReference type="ProteomicsDB" id="257078"/>
<dbReference type="Antibodypedia" id="74216">
    <property type="antibodies" value="185 antibodies from 32 providers"/>
</dbReference>
<dbReference type="DNASU" id="20607"/>
<dbReference type="Ensembl" id="ENSMUST00000053239.4">
    <property type="protein sequence ID" value="ENSMUSP00000058040.3"/>
    <property type="gene ID" value="ENSMUSG00000044933.4"/>
</dbReference>
<dbReference type="GeneID" id="20607"/>
<dbReference type="KEGG" id="mmu:20607"/>
<dbReference type="UCSC" id="uc007wpo.1">
    <property type="organism name" value="mouse"/>
</dbReference>
<dbReference type="AGR" id="MGI:98329"/>
<dbReference type="CTD" id="6753"/>
<dbReference type="MGI" id="MGI:98329">
    <property type="gene designation" value="Sstr3"/>
</dbReference>
<dbReference type="VEuPathDB" id="HostDB:ENSMUSG00000044933"/>
<dbReference type="eggNOG" id="KOG3656">
    <property type="taxonomic scope" value="Eukaryota"/>
</dbReference>
<dbReference type="GeneTree" id="ENSGT00940000162038"/>
<dbReference type="HOGENOM" id="CLU_009579_8_1_1"/>
<dbReference type="InParanoid" id="P30935"/>
<dbReference type="OMA" id="EVPACPP"/>
<dbReference type="OrthoDB" id="6076970at2759"/>
<dbReference type="PhylomeDB" id="P30935"/>
<dbReference type="TreeFam" id="TF315737"/>
<dbReference type="Reactome" id="R-MMU-375276">
    <property type="pathway name" value="Peptide ligand-binding receptors"/>
</dbReference>
<dbReference type="Reactome" id="R-MMU-418594">
    <property type="pathway name" value="G alpha (i) signalling events"/>
</dbReference>
<dbReference type="Reactome" id="R-MMU-5620922">
    <property type="pathway name" value="BBSome-mediated cargo-targeting to cilium"/>
</dbReference>
<dbReference type="BioGRID-ORCS" id="20607">
    <property type="hits" value="1 hit in 80 CRISPR screens"/>
</dbReference>
<dbReference type="PRO" id="PR:P30935"/>
<dbReference type="Proteomes" id="UP000000589">
    <property type="component" value="Chromosome 15"/>
</dbReference>
<dbReference type="RNAct" id="P30935">
    <property type="molecule type" value="protein"/>
</dbReference>
<dbReference type="Bgee" id="ENSMUSG00000044933">
    <property type="expression patterns" value="Expressed in islet of Langerhans and 70 other cell types or tissues"/>
</dbReference>
<dbReference type="ExpressionAtlas" id="P30935">
    <property type="expression patterns" value="baseline and differential"/>
</dbReference>
<dbReference type="GO" id="GO:0060170">
    <property type="term" value="C:ciliary membrane"/>
    <property type="evidence" value="ECO:0000314"/>
    <property type="project" value="MGI"/>
</dbReference>
<dbReference type="GO" id="GO:0005929">
    <property type="term" value="C:cilium"/>
    <property type="evidence" value="ECO:0000314"/>
    <property type="project" value="MGI"/>
</dbReference>
<dbReference type="GO" id="GO:0043005">
    <property type="term" value="C:neuron projection"/>
    <property type="evidence" value="ECO:0000314"/>
    <property type="project" value="MGI"/>
</dbReference>
<dbReference type="GO" id="GO:0097730">
    <property type="term" value="C:non-motile cilium"/>
    <property type="evidence" value="ECO:0000314"/>
    <property type="project" value="BHF-UCL"/>
</dbReference>
<dbReference type="GO" id="GO:0005886">
    <property type="term" value="C:plasma membrane"/>
    <property type="evidence" value="ECO:0000314"/>
    <property type="project" value="MGI"/>
</dbReference>
<dbReference type="GO" id="GO:0005102">
    <property type="term" value="F:signaling receptor binding"/>
    <property type="evidence" value="ECO:0000353"/>
    <property type="project" value="MGI"/>
</dbReference>
<dbReference type="GO" id="GO:0004994">
    <property type="term" value="F:somatostatin receptor activity"/>
    <property type="evidence" value="ECO:0007669"/>
    <property type="project" value="InterPro"/>
</dbReference>
<dbReference type="FunFam" id="1.20.1070.10:FF:000039">
    <property type="entry name" value="somatostatin receptor type 2"/>
    <property type="match status" value="1"/>
</dbReference>
<dbReference type="Gene3D" id="1.20.1070.10">
    <property type="entry name" value="Rhodopsin 7-helix transmembrane proteins"/>
    <property type="match status" value="1"/>
</dbReference>
<dbReference type="InterPro" id="IPR000276">
    <property type="entry name" value="GPCR_Rhodpsn"/>
</dbReference>
<dbReference type="InterPro" id="IPR017452">
    <property type="entry name" value="GPCR_Rhodpsn_7TM"/>
</dbReference>
<dbReference type="InterPro" id="IPR000586">
    <property type="entry name" value="Somatstn_rcpt"/>
</dbReference>
<dbReference type="InterPro" id="IPR001856">
    <property type="entry name" value="Somatstn_rcpt_3"/>
</dbReference>
<dbReference type="PANTHER" id="PTHR24229">
    <property type="entry name" value="NEUROPEPTIDES RECEPTOR"/>
    <property type="match status" value="1"/>
</dbReference>
<dbReference type="PANTHER" id="PTHR24229:SF42">
    <property type="entry name" value="SOMATOSTATIN RECEPTOR TYPE 3"/>
    <property type="match status" value="1"/>
</dbReference>
<dbReference type="Pfam" id="PF00001">
    <property type="entry name" value="7tm_1"/>
    <property type="match status" value="1"/>
</dbReference>
<dbReference type="PRINTS" id="PR00237">
    <property type="entry name" value="GPCRRHODOPSN"/>
</dbReference>
<dbReference type="PRINTS" id="PR00246">
    <property type="entry name" value="SOMATOSTATNR"/>
</dbReference>
<dbReference type="PRINTS" id="PR00589">
    <property type="entry name" value="SOMATOSTTN3R"/>
</dbReference>
<dbReference type="SMART" id="SM01381">
    <property type="entry name" value="7TM_GPCR_Srsx"/>
    <property type="match status" value="1"/>
</dbReference>
<dbReference type="SUPFAM" id="SSF81321">
    <property type="entry name" value="Family A G protein-coupled receptor-like"/>
    <property type="match status" value="1"/>
</dbReference>
<dbReference type="PROSITE" id="PS00237">
    <property type="entry name" value="G_PROTEIN_RECEP_F1_1"/>
    <property type="match status" value="1"/>
</dbReference>
<dbReference type="PROSITE" id="PS50262">
    <property type="entry name" value="G_PROTEIN_RECEP_F1_2"/>
    <property type="match status" value="1"/>
</dbReference>
<reference key="1">
    <citation type="journal article" date="1992" name="J. Biol. Chem.">
        <title>Cloning of a novel somatostatin receptor, SSTR3, coupled to adenylylcyclase.</title>
        <authorList>
            <person name="Yasuda K."/>
            <person name="Rens-Domiano S."/>
            <person name="Breder C.D."/>
            <person name="Law S.F."/>
            <person name="Saper C.B."/>
            <person name="Reisine T."/>
            <person name="Bell G.I."/>
        </authorList>
    </citation>
    <scope>NUCLEOTIDE SEQUENCE [GENOMIC DNA]</scope>
    <scope>FUNCTION</scope>
    <scope>TISSUE SPECIFICITY</scope>
</reference>
<reference key="2">
    <citation type="journal article" date="2005" name="Science">
        <title>The transcriptional landscape of the mammalian genome.</title>
        <authorList>
            <person name="Carninci P."/>
            <person name="Kasukawa T."/>
            <person name="Katayama S."/>
            <person name="Gough J."/>
            <person name="Frith M.C."/>
            <person name="Maeda N."/>
            <person name="Oyama R."/>
            <person name="Ravasi T."/>
            <person name="Lenhard B."/>
            <person name="Wells C."/>
            <person name="Kodzius R."/>
            <person name="Shimokawa K."/>
            <person name="Bajic V.B."/>
            <person name="Brenner S.E."/>
            <person name="Batalov S."/>
            <person name="Forrest A.R."/>
            <person name="Zavolan M."/>
            <person name="Davis M.J."/>
            <person name="Wilming L.G."/>
            <person name="Aidinis V."/>
            <person name="Allen J.E."/>
            <person name="Ambesi-Impiombato A."/>
            <person name="Apweiler R."/>
            <person name="Aturaliya R.N."/>
            <person name="Bailey T.L."/>
            <person name="Bansal M."/>
            <person name="Baxter L."/>
            <person name="Beisel K.W."/>
            <person name="Bersano T."/>
            <person name="Bono H."/>
            <person name="Chalk A.M."/>
            <person name="Chiu K.P."/>
            <person name="Choudhary V."/>
            <person name="Christoffels A."/>
            <person name="Clutterbuck D.R."/>
            <person name="Crowe M.L."/>
            <person name="Dalla E."/>
            <person name="Dalrymple B.P."/>
            <person name="de Bono B."/>
            <person name="Della Gatta G."/>
            <person name="di Bernardo D."/>
            <person name="Down T."/>
            <person name="Engstrom P."/>
            <person name="Fagiolini M."/>
            <person name="Faulkner G."/>
            <person name="Fletcher C.F."/>
            <person name="Fukushima T."/>
            <person name="Furuno M."/>
            <person name="Futaki S."/>
            <person name="Gariboldi M."/>
            <person name="Georgii-Hemming P."/>
            <person name="Gingeras T.R."/>
            <person name="Gojobori T."/>
            <person name="Green R.E."/>
            <person name="Gustincich S."/>
            <person name="Harbers M."/>
            <person name="Hayashi Y."/>
            <person name="Hensch T.K."/>
            <person name="Hirokawa N."/>
            <person name="Hill D."/>
            <person name="Huminiecki L."/>
            <person name="Iacono M."/>
            <person name="Ikeo K."/>
            <person name="Iwama A."/>
            <person name="Ishikawa T."/>
            <person name="Jakt M."/>
            <person name="Kanapin A."/>
            <person name="Katoh M."/>
            <person name="Kawasawa Y."/>
            <person name="Kelso J."/>
            <person name="Kitamura H."/>
            <person name="Kitano H."/>
            <person name="Kollias G."/>
            <person name="Krishnan S.P."/>
            <person name="Kruger A."/>
            <person name="Kummerfeld S.K."/>
            <person name="Kurochkin I.V."/>
            <person name="Lareau L.F."/>
            <person name="Lazarevic D."/>
            <person name="Lipovich L."/>
            <person name="Liu J."/>
            <person name="Liuni S."/>
            <person name="McWilliam S."/>
            <person name="Madan Babu M."/>
            <person name="Madera M."/>
            <person name="Marchionni L."/>
            <person name="Matsuda H."/>
            <person name="Matsuzawa S."/>
            <person name="Miki H."/>
            <person name="Mignone F."/>
            <person name="Miyake S."/>
            <person name="Morris K."/>
            <person name="Mottagui-Tabar S."/>
            <person name="Mulder N."/>
            <person name="Nakano N."/>
            <person name="Nakauchi H."/>
            <person name="Ng P."/>
            <person name="Nilsson R."/>
            <person name="Nishiguchi S."/>
            <person name="Nishikawa S."/>
            <person name="Nori F."/>
            <person name="Ohara O."/>
            <person name="Okazaki Y."/>
            <person name="Orlando V."/>
            <person name="Pang K.C."/>
            <person name="Pavan W.J."/>
            <person name="Pavesi G."/>
            <person name="Pesole G."/>
            <person name="Petrovsky N."/>
            <person name="Piazza S."/>
            <person name="Reed J."/>
            <person name="Reid J.F."/>
            <person name="Ring B.Z."/>
            <person name="Ringwald M."/>
            <person name="Rost B."/>
            <person name="Ruan Y."/>
            <person name="Salzberg S.L."/>
            <person name="Sandelin A."/>
            <person name="Schneider C."/>
            <person name="Schoenbach C."/>
            <person name="Sekiguchi K."/>
            <person name="Semple C.A."/>
            <person name="Seno S."/>
            <person name="Sessa L."/>
            <person name="Sheng Y."/>
            <person name="Shibata Y."/>
            <person name="Shimada H."/>
            <person name="Shimada K."/>
            <person name="Silva D."/>
            <person name="Sinclair B."/>
            <person name="Sperling S."/>
            <person name="Stupka E."/>
            <person name="Sugiura K."/>
            <person name="Sultana R."/>
            <person name="Takenaka Y."/>
            <person name="Taki K."/>
            <person name="Tammoja K."/>
            <person name="Tan S.L."/>
            <person name="Tang S."/>
            <person name="Taylor M.S."/>
            <person name="Tegner J."/>
            <person name="Teichmann S.A."/>
            <person name="Ueda H.R."/>
            <person name="van Nimwegen E."/>
            <person name="Verardo R."/>
            <person name="Wei C.L."/>
            <person name="Yagi K."/>
            <person name="Yamanishi H."/>
            <person name="Zabarovsky E."/>
            <person name="Zhu S."/>
            <person name="Zimmer A."/>
            <person name="Hide W."/>
            <person name="Bult C."/>
            <person name="Grimmond S.M."/>
            <person name="Teasdale R.D."/>
            <person name="Liu E.T."/>
            <person name="Brusic V."/>
            <person name="Quackenbush J."/>
            <person name="Wahlestedt C."/>
            <person name="Mattick J.S."/>
            <person name="Hume D.A."/>
            <person name="Kai C."/>
            <person name="Sasaki D."/>
            <person name="Tomaru Y."/>
            <person name="Fukuda S."/>
            <person name="Kanamori-Katayama M."/>
            <person name="Suzuki M."/>
            <person name="Aoki J."/>
            <person name="Arakawa T."/>
            <person name="Iida J."/>
            <person name="Imamura K."/>
            <person name="Itoh M."/>
            <person name="Kato T."/>
            <person name="Kawaji H."/>
            <person name="Kawagashira N."/>
            <person name="Kawashima T."/>
            <person name="Kojima M."/>
            <person name="Kondo S."/>
            <person name="Konno H."/>
            <person name="Nakano K."/>
            <person name="Ninomiya N."/>
            <person name="Nishio T."/>
            <person name="Okada M."/>
            <person name="Plessy C."/>
            <person name="Shibata K."/>
            <person name="Shiraki T."/>
            <person name="Suzuki S."/>
            <person name="Tagami M."/>
            <person name="Waki K."/>
            <person name="Watahiki A."/>
            <person name="Okamura-Oho Y."/>
            <person name="Suzuki H."/>
            <person name="Kawai J."/>
            <person name="Hayashizaki Y."/>
        </authorList>
    </citation>
    <scope>NUCLEOTIDE SEQUENCE [LARGE SCALE MRNA]</scope>
    <source>
        <strain>C57BL/6J</strain>
        <tissue>Diencephalon</tissue>
    </source>
</reference>
<reference key="3">
    <citation type="journal article" date="2009" name="PLoS Biol.">
        <title>Lineage-specific biology revealed by a finished genome assembly of the mouse.</title>
        <authorList>
            <person name="Church D.M."/>
            <person name="Goodstadt L."/>
            <person name="Hillier L.W."/>
            <person name="Zody M.C."/>
            <person name="Goldstein S."/>
            <person name="She X."/>
            <person name="Bult C.J."/>
            <person name="Agarwala R."/>
            <person name="Cherry J.L."/>
            <person name="DiCuccio M."/>
            <person name="Hlavina W."/>
            <person name="Kapustin Y."/>
            <person name="Meric P."/>
            <person name="Maglott D."/>
            <person name="Birtle Z."/>
            <person name="Marques A.C."/>
            <person name="Graves T."/>
            <person name="Zhou S."/>
            <person name="Teague B."/>
            <person name="Potamousis K."/>
            <person name="Churas C."/>
            <person name="Place M."/>
            <person name="Herschleb J."/>
            <person name="Runnheim R."/>
            <person name="Forrest D."/>
            <person name="Amos-Landgraf J."/>
            <person name="Schwartz D.C."/>
            <person name="Cheng Z."/>
            <person name="Lindblad-Toh K."/>
            <person name="Eichler E.E."/>
            <person name="Ponting C.P."/>
        </authorList>
    </citation>
    <scope>NUCLEOTIDE SEQUENCE [LARGE SCALE GENOMIC DNA]</scope>
    <source>
        <strain>C57BL/6J</strain>
    </source>
</reference>
<reference key="4">
    <citation type="journal article" date="2004" name="Genome Res.">
        <title>The status, quality, and expansion of the NIH full-length cDNA project: the Mammalian Gene Collection (MGC).</title>
        <authorList>
            <consortium name="The MGC Project Team"/>
        </authorList>
    </citation>
    <scope>NUCLEOTIDE SEQUENCE [LARGE SCALE MRNA]</scope>
    <source>
        <tissue>Brain</tissue>
    </source>
</reference>
<sequence>MATVTYPSSEPTTLDPGNASSTWPLDTTLGNTSAGASLTGLAVSGILISLVYLVVCVVGLLGNSLVIYVVLRHTSSPSVTSVYILNLALADELFMLGLPFLAAQNALSYWPFGSLMCRLVMAVDGINQFTSIFCLTVMSVDRYLAVVHPTRSARWRTAPVARTVSAAVWVASAVVVLPVVVFSGVPRGMSTCHMQWPEPAAAWRTAFIIYTAALGFFGPLLVICLCYLLIVVKVRSTTRRVRAPSCQWVQAPACQRRRRSERRVTRMVVAVVALFVLCWMPFYLLNIVNVVCPLPEEPAFFGLYFLVVALPYANSCANPILYGFLSYRFKQGFRRILLRPSRRIRSQEPGSGPPEKTEEEEDEEEEERREEEERRMQRGQEMNGRLSQIAQAGTSGQQPRPCTGTAKEQQLLPQEATAGDKASTLSHL</sequence>
<feature type="chain" id="PRO_0000070125" description="Somatostatin receptor type 3">
    <location>
        <begin position="1"/>
        <end position="428"/>
    </location>
</feature>
<feature type="topological domain" description="Extracellular" evidence="3">
    <location>
        <begin position="1"/>
        <end position="45"/>
    </location>
</feature>
<feature type="transmembrane region" description="Helical; Name=1" evidence="3">
    <location>
        <begin position="46"/>
        <end position="71"/>
    </location>
</feature>
<feature type="topological domain" description="Cytoplasmic" evidence="3">
    <location>
        <begin position="72"/>
        <end position="81"/>
    </location>
</feature>
<feature type="transmembrane region" description="Helical; Name=2" evidence="3">
    <location>
        <begin position="82"/>
        <end position="103"/>
    </location>
</feature>
<feature type="topological domain" description="Extracellular" evidence="3">
    <location>
        <begin position="104"/>
        <end position="118"/>
    </location>
</feature>
<feature type="transmembrane region" description="Helical; Name=3" evidence="3">
    <location>
        <begin position="119"/>
        <end position="140"/>
    </location>
</feature>
<feature type="topological domain" description="Cytoplasmic" evidence="3">
    <location>
        <begin position="141"/>
        <end position="162"/>
    </location>
</feature>
<feature type="transmembrane region" description="Helical; Name=4" evidence="3">
    <location>
        <begin position="163"/>
        <end position="182"/>
    </location>
</feature>
<feature type="topological domain" description="Extracellular" evidence="3">
    <location>
        <begin position="183"/>
        <end position="206"/>
    </location>
</feature>
<feature type="transmembrane region" description="Helical; Name=5" evidence="3">
    <location>
        <begin position="207"/>
        <end position="232"/>
    </location>
</feature>
<feature type="topological domain" description="Cytoplasmic" evidence="3">
    <location>
        <begin position="233"/>
        <end position="266"/>
    </location>
</feature>
<feature type="transmembrane region" description="Helical; Name=6" evidence="3">
    <location>
        <begin position="267"/>
        <end position="288"/>
    </location>
</feature>
<feature type="topological domain" description="Extracellular" evidence="3">
    <location>
        <begin position="289"/>
        <end position="302"/>
    </location>
</feature>
<feature type="transmembrane region" description="Helical; Name=7" evidence="3">
    <location>
        <begin position="303"/>
        <end position="325"/>
    </location>
</feature>
<feature type="topological domain" description="Cytoplasmic" evidence="3">
    <location>
        <begin position="326"/>
        <end position="428"/>
    </location>
</feature>
<feature type="region of interest" description="Disordered" evidence="5">
    <location>
        <begin position="1"/>
        <end position="20"/>
    </location>
</feature>
<feature type="region of interest" description="Disordered" evidence="5">
    <location>
        <begin position="344"/>
        <end position="428"/>
    </location>
</feature>
<feature type="compositionally biased region" description="Polar residues" evidence="5">
    <location>
        <begin position="1"/>
        <end position="12"/>
    </location>
</feature>
<feature type="compositionally biased region" description="Acidic residues" evidence="5">
    <location>
        <begin position="357"/>
        <end position="370"/>
    </location>
</feature>
<feature type="compositionally biased region" description="Polar residues" evidence="5">
    <location>
        <begin position="385"/>
        <end position="412"/>
    </location>
</feature>
<feature type="modified residue" description="Phosphoserine" evidence="2">
    <location>
        <position position="341"/>
    </location>
</feature>
<feature type="modified residue" description="Phosphoserine" evidence="2">
    <location>
        <position position="346"/>
    </location>
</feature>
<feature type="modified residue" description="Phosphoserine" evidence="2">
    <location>
        <position position="351"/>
    </location>
</feature>
<feature type="modified residue" description="Phosphothreonine" evidence="2">
    <location>
        <position position="357"/>
    </location>
</feature>
<feature type="glycosylation site" description="N-linked (GlcNAc...) asparagine" evidence="3">
    <location>
        <position position="18"/>
    </location>
</feature>
<feature type="glycosylation site" description="N-linked (GlcNAc...) asparagine" evidence="3">
    <location>
        <position position="31"/>
    </location>
</feature>
<feature type="disulfide bond" evidence="4">
    <location>
        <begin position="117"/>
        <end position="192"/>
    </location>
</feature>
<feature type="sequence conflict" description="In Ref. 1; AAA40144 and 4; AAI20844/AAI37671." evidence="7" ref="1 4">
    <original>T</original>
    <variation>M</variation>
    <location>
        <position position="12"/>
    </location>
</feature>
<feature type="sequence conflict" description="In Ref. 1; AAA40144 and 4; AAI20844/AAI37671." evidence="7" ref="1 4">
    <original>A</original>
    <variation>T</variation>
    <location>
        <position position="19"/>
    </location>
</feature>
<feature type="sequence conflict" description="In Ref. 1; AAA40144." evidence="7" ref="1">
    <original>A</original>
    <variation>R</variation>
    <location>
        <position position="166"/>
    </location>
</feature>
<feature type="sequence conflict" description="In Ref. 1; AAA40144." evidence="7" ref="1">
    <original>T</original>
    <variation>M</variation>
    <location>
        <position position="211"/>
    </location>
</feature>
<comment type="function">
    <text evidence="6">Receptor for somatostatin-14 and -28. This receptor is coupled via pertussis toxin sensitive G proteins to inhibition of adenylyl cyclase.</text>
</comment>
<comment type="subunit">
    <text evidence="1">Homodimer and heterodimer with SSTR2. Heterodimerization with SSTR2 inactivates SSTR3 receptor function (By similarity).</text>
</comment>
<comment type="subcellular location">
    <subcellularLocation>
        <location evidence="1">Cell membrane</location>
        <topology evidence="1">Multi-pass membrane protein</topology>
    </subcellularLocation>
    <text evidence="1">Internalized into endoplasmic vesicles upon somatostatin-stimulation.</text>
</comment>
<comment type="tissue specificity">
    <text evidence="6">In the brain, primarily observed in the forebrain. Moderate levels found throughout laminae 2-6 of the neocortex and allocortex, and high levels in lamina 2 of the piriform and entorhinal cortices. High levels also present in the cornu ammonis fields of the hippocampus. In the amygdala, highly expressed in the nucleus of the lateral olfactory tract with expression also detected in the rostral portions of the basal magnocellular and lateral nuclei. In the diencephalon, moderate levels observed in the ventromedial and arcuate nuclei of the hypothalamus. In the midbrain, moderate levels found in the lateral portion of the substantia nigra pars reticulata.</text>
</comment>
<comment type="PTM">
    <text evidence="1">Phosphorylated. Phosphorylation increases upon somatostatin binding (By similarity).</text>
</comment>
<comment type="similarity">
    <text evidence="4">Belongs to the G-protein coupled receptor 1 family.</text>
</comment>
<organism>
    <name type="scientific">Mus musculus</name>
    <name type="common">Mouse</name>
    <dbReference type="NCBI Taxonomy" id="10090"/>
    <lineage>
        <taxon>Eukaryota</taxon>
        <taxon>Metazoa</taxon>
        <taxon>Chordata</taxon>
        <taxon>Craniata</taxon>
        <taxon>Vertebrata</taxon>
        <taxon>Euteleostomi</taxon>
        <taxon>Mammalia</taxon>
        <taxon>Eutheria</taxon>
        <taxon>Euarchontoglires</taxon>
        <taxon>Glires</taxon>
        <taxon>Rodentia</taxon>
        <taxon>Myomorpha</taxon>
        <taxon>Muroidea</taxon>
        <taxon>Muridae</taxon>
        <taxon>Murinae</taxon>
        <taxon>Mus</taxon>
        <taxon>Mus</taxon>
    </lineage>
</organism>